<gene>
    <name type="primary">hldE</name>
    <name type="synonym">rfaE</name>
    <name type="synonym">waaE</name>
    <name type="ordered locus">STM3200</name>
</gene>
<keyword id="KW-0067">ATP-binding</keyword>
<keyword id="KW-0119">Carbohydrate metabolism</keyword>
<keyword id="KW-0418">Kinase</keyword>
<keyword id="KW-0448">Lipopolysaccharide biosynthesis</keyword>
<keyword id="KW-0511">Multifunctional enzyme</keyword>
<keyword id="KW-0547">Nucleotide-binding</keyword>
<keyword id="KW-0548">Nucleotidyltransferase</keyword>
<keyword id="KW-1185">Reference proteome</keyword>
<keyword id="KW-0808">Transferase</keyword>
<reference key="1">
    <citation type="journal article" date="2001" name="Glycoconj. J.">
        <title>Molecular cloning and functional expression of the rfaE gene required for lipopolysaccharide biosynthesis in Salmonella typhimurium.</title>
        <authorList>
            <person name="Jin U.-H."/>
            <person name="Chung T.-W."/>
            <person name="Lee Y.-C."/>
            <person name="Ha S.-D."/>
            <person name="Kim C.-H."/>
        </authorList>
    </citation>
    <scope>NUCLEOTIDE SEQUENCE [GENOMIC DNA]</scope>
    <scope>ROLE IN LPS BIOSYNTHESIS</scope>
</reference>
<reference key="2">
    <citation type="journal article" date="2000" name="J. Bacteriol.">
        <title>The rfaE gene from Escherichia coli encodes a bifunctional protein involved in the biosynthesis of the lipopolysaccharide core precursor ADP-L-glycero-D-manno-heptose.</title>
        <authorList>
            <person name="Valvano M.A."/>
            <person name="Marolda C.L."/>
            <person name="Bittner M."/>
            <person name="Glaskin-Clay M."/>
            <person name="Simon T.L."/>
            <person name="Klena J.D."/>
        </authorList>
    </citation>
    <scope>NUCLEOTIDE SEQUENCE [GENOMIC DNA] (MUTANTS SL1027 AND SL1102)</scope>
</reference>
<reference key="3">
    <citation type="journal article" date="2001" name="Nature">
        <title>Complete genome sequence of Salmonella enterica serovar Typhimurium LT2.</title>
        <authorList>
            <person name="McClelland M."/>
            <person name="Sanderson K.E."/>
            <person name="Spieth J."/>
            <person name="Clifton S.W."/>
            <person name="Latreille P."/>
            <person name="Courtney L."/>
            <person name="Porwollik S."/>
            <person name="Ali J."/>
            <person name="Dante M."/>
            <person name="Du F."/>
            <person name="Hou S."/>
            <person name="Layman D."/>
            <person name="Leonard S."/>
            <person name="Nguyen C."/>
            <person name="Scott K."/>
            <person name="Holmes A."/>
            <person name="Grewal N."/>
            <person name="Mulvaney E."/>
            <person name="Ryan E."/>
            <person name="Sun H."/>
            <person name="Florea L."/>
            <person name="Miller W."/>
            <person name="Stoneking T."/>
            <person name="Nhan M."/>
            <person name="Waterston R."/>
            <person name="Wilson R.K."/>
        </authorList>
    </citation>
    <scope>NUCLEOTIDE SEQUENCE [LARGE SCALE GENOMIC DNA]</scope>
    <source>
        <strain>LT2 / SGSC1412 / ATCC 700720</strain>
    </source>
</reference>
<protein>
    <recommendedName>
        <fullName>Bifunctional protein HldE</fullName>
    </recommendedName>
    <domain>
        <recommendedName>
            <fullName>D-beta-D-heptose 7-phosphate kinase</fullName>
            <ecNumber>2.7.1.167</ecNumber>
        </recommendedName>
        <alternativeName>
            <fullName>D-beta-D-heptose 7-phosphotransferase</fullName>
        </alternativeName>
        <alternativeName>
            <fullName>D-glycero-beta-D-manno-heptose-7-phosphate kinase</fullName>
        </alternativeName>
    </domain>
    <domain>
        <recommendedName>
            <fullName>D-beta-D-heptose 1-phosphate adenylyltransferase</fullName>
            <ecNumber>2.7.7.70</ecNumber>
        </recommendedName>
        <alternativeName>
            <fullName>D-glycero-beta-D-manno-heptose 1-phosphate adenylyltransferase</fullName>
        </alternativeName>
    </domain>
</protein>
<sequence>MKVNLPAFERAGVMVVGDVMLDRYWYGPTCRISPEAPVPVVKVNTVEERPGGAANVAMNIASLGANARLVGLTGIDDAARALSKTLAEVNVKCDFVSVPTHPTITKLRVLSRNQQLIRLDFEEGFEGVDPQPLHERINQALGSIGALVLSDYAKGALTSVQTMISLARQAGVPVLIDPKGTDFERYRGATLLTPNLSEFEAVAGKCKSEDELVERGMKLIADYDLSALLVTRSEQGMTLLQPNKAPLHMPTQAQEVYDVTGAGDTVIGVLAATLAAGNTLEEACYFANAAAGVVVGKLGTSTVSPIELENAVRGRADTGFGVMTEEELRQAVASARKRGEKVVMTNGVFDILHAGHVSYLANARKLGDRLIVAVNSDASTKRLKGESRPVNPLEQRMIVLGALESVDWVVSFEEDTPQRLIAGILPDLLVKGGDYKPEEIAGSEEVWANGGEVMVLNFEDGCSTTNIIKKIQTESEK</sequence>
<name>HLDE_SALTY</name>
<organism>
    <name type="scientific">Salmonella typhimurium (strain LT2 / SGSC1412 / ATCC 700720)</name>
    <dbReference type="NCBI Taxonomy" id="99287"/>
    <lineage>
        <taxon>Bacteria</taxon>
        <taxon>Pseudomonadati</taxon>
        <taxon>Pseudomonadota</taxon>
        <taxon>Gammaproteobacteria</taxon>
        <taxon>Enterobacterales</taxon>
        <taxon>Enterobacteriaceae</taxon>
        <taxon>Salmonella</taxon>
    </lineage>
</organism>
<dbReference type="EC" id="2.7.1.167"/>
<dbReference type="EC" id="2.7.7.70"/>
<dbReference type="EMBL" id="AF155126">
    <property type="protein sequence ID" value="AAK20933.1"/>
    <property type="molecule type" value="Genomic_DNA"/>
</dbReference>
<dbReference type="EMBL" id="AF163661">
    <property type="protein sequence ID" value="AAD49846.1"/>
    <property type="molecule type" value="Genomic_DNA"/>
</dbReference>
<dbReference type="EMBL" id="AF163662">
    <property type="protein sequence ID" value="AAD49847.1"/>
    <property type="molecule type" value="Genomic_DNA"/>
</dbReference>
<dbReference type="EMBL" id="AE006468">
    <property type="protein sequence ID" value="AAL22074.1"/>
    <property type="molecule type" value="Genomic_DNA"/>
</dbReference>
<dbReference type="RefSeq" id="NP_462115.1">
    <property type="nucleotide sequence ID" value="NC_003197.2"/>
</dbReference>
<dbReference type="RefSeq" id="WP_000867682.1">
    <property type="nucleotide sequence ID" value="NC_003197.2"/>
</dbReference>
<dbReference type="SMR" id="Q7CPR9"/>
<dbReference type="STRING" id="99287.STM3200"/>
<dbReference type="PaxDb" id="99287-STM3200"/>
<dbReference type="DNASU" id="1254723"/>
<dbReference type="GeneID" id="1254723"/>
<dbReference type="KEGG" id="stm:STM3200"/>
<dbReference type="PATRIC" id="fig|99287.12.peg.3395"/>
<dbReference type="HOGENOM" id="CLU_021150_2_1_6"/>
<dbReference type="OMA" id="ILNQTHP"/>
<dbReference type="PhylomeDB" id="Q7CPR9"/>
<dbReference type="BioCyc" id="SENT99287:STM3200-MONOMER"/>
<dbReference type="BRENDA" id="2.7.1.167">
    <property type="organism ID" value="5542"/>
</dbReference>
<dbReference type="BRENDA" id="2.7.7.70">
    <property type="organism ID" value="5542"/>
</dbReference>
<dbReference type="UniPathway" id="UPA00356">
    <property type="reaction ID" value="UER00437"/>
</dbReference>
<dbReference type="UniPathway" id="UPA00356">
    <property type="reaction ID" value="UER00439"/>
</dbReference>
<dbReference type="UniPathway" id="UPA00958"/>
<dbReference type="Proteomes" id="UP000001014">
    <property type="component" value="Chromosome"/>
</dbReference>
<dbReference type="GO" id="GO:0005829">
    <property type="term" value="C:cytosol"/>
    <property type="evidence" value="ECO:0000318"/>
    <property type="project" value="GO_Central"/>
</dbReference>
<dbReference type="GO" id="GO:0005524">
    <property type="term" value="F:ATP binding"/>
    <property type="evidence" value="ECO:0007669"/>
    <property type="project" value="UniProtKB-UniRule"/>
</dbReference>
<dbReference type="GO" id="GO:0033785">
    <property type="term" value="F:heptose 7-phosphate kinase activity"/>
    <property type="evidence" value="ECO:0000318"/>
    <property type="project" value="GO_Central"/>
</dbReference>
<dbReference type="GO" id="GO:0033786">
    <property type="term" value="F:heptose-1-phosphate adenylyltransferase activity"/>
    <property type="evidence" value="ECO:0000318"/>
    <property type="project" value="GO_Central"/>
</dbReference>
<dbReference type="GO" id="GO:0016773">
    <property type="term" value="F:phosphotransferase activity, alcohol group as acceptor"/>
    <property type="evidence" value="ECO:0007669"/>
    <property type="project" value="InterPro"/>
</dbReference>
<dbReference type="GO" id="GO:0097171">
    <property type="term" value="P:ADP-L-glycero-beta-D-manno-heptose biosynthetic process"/>
    <property type="evidence" value="ECO:0007669"/>
    <property type="project" value="UniProtKB-UniPathway"/>
</dbReference>
<dbReference type="GO" id="GO:0009244">
    <property type="term" value="P:lipopolysaccharide core region biosynthetic process"/>
    <property type="evidence" value="ECO:0007669"/>
    <property type="project" value="UniProtKB-UniPathway"/>
</dbReference>
<dbReference type="CDD" id="cd01172">
    <property type="entry name" value="RfaE_like"/>
    <property type="match status" value="1"/>
</dbReference>
<dbReference type="FunFam" id="3.40.1190.20:FF:000002">
    <property type="entry name" value="Bifunctional protein HldE"/>
    <property type="match status" value="1"/>
</dbReference>
<dbReference type="FunFam" id="3.40.50.620:FF:000028">
    <property type="entry name" value="Bifunctional protein HldE"/>
    <property type="match status" value="1"/>
</dbReference>
<dbReference type="Gene3D" id="3.40.1190.20">
    <property type="match status" value="1"/>
</dbReference>
<dbReference type="Gene3D" id="3.40.50.620">
    <property type="entry name" value="HUPs"/>
    <property type="match status" value="1"/>
</dbReference>
<dbReference type="HAMAP" id="MF_01603">
    <property type="entry name" value="HldE"/>
    <property type="match status" value="1"/>
</dbReference>
<dbReference type="InterPro" id="IPR023030">
    <property type="entry name" value="Bifunc_HldE"/>
</dbReference>
<dbReference type="InterPro" id="IPR002173">
    <property type="entry name" value="Carboh/pur_kinase_PfkB_CS"/>
</dbReference>
<dbReference type="InterPro" id="IPR004821">
    <property type="entry name" value="Cyt_trans-like"/>
</dbReference>
<dbReference type="InterPro" id="IPR011611">
    <property type="entry name" value="PfkB_dom"/>
</dbReference>
<dbReference type="InterPro" id="IPR011913">
    <property type="entry name" value="RfaE_dom_I"/>
</dbReference>
<dbReference type="InterPro" id="IPR011914">
    <property type="entry name" value="RfaE_dom_II"/>
</dbReference>
<dbReference type="InterPro" id="IPR029056">
    <property type="entry name" value="Ribokinase-like"/>
</dbReference>
<dbReference type="InterPro" id="IPR014729">
    <property type="entry name" value="Rossmann-like_a/b/a_fold"/>
</dbReference>
<dbReference type="NCBIfam" id="TIGR00125">
    <property type="entry name" value="cyt_tran_rel"/>
    <property type="match status" value="1"/>
</dbReference>
<dbReference type="NCBIfam" id="NF008454">
    <property type="entry name" value="PRK11316.1"/>
    <property type="match status" value="1"/>
</dbReference>
<dbReference type="NCBIfam" id="TIGR02198">
    <property type="entry name" value="rfaE_dom_I"/>
    <property type="match status" value="1"/>
</dbReference>
<dbReference type="NCBIfam" id="TIGR02199">
    <property type="entry name" value="rfaE_dom_II"/>
    <property type="match status" value="1"/>
</dbReference>
<dbReference type="PANTHER" id="PTHR46969">
    <property type="entry name" value="BIFUNCTIONAL PROTEIN HLDE"/>
    <property type="match status" value="1"/>
</dbReference>
<dbReference type="PANTHER" id="PTHR46969:SF1">
    <property type="entry name" value="BIFUNCTIONAL PROTEIN HLDE"/>
    <property type="match status" value="1"/>
</dbReference>
<dbReference type="Pfam" id="PF01467">
    <property type="entry name" value="CTP_transf_like"/>
    <property type="match status" value="1"/>
</dbReference>
<dbReference type="Pfam" id="PF00294">
    <property type="entry name" value="PfkB"/>
    <property type="match status" value="1"/>
</dbReference>
<dbReference type="SUPFAM" id="SSF52374">
    <property type="entry name" value="Nucleotidylyl transferase"/>
    <property type="match status" value="1"/>
</dbReference>
<dbReference type="SUPFAM" id="SSF53613">
    <property type="entry name" value="Ribokinase-like"/>
    <property type="match status" value="1"/>
</dbReference>
<dbReference type="PROSITE" id="PS00583">
    <property type="entry name" value="PFKB_KINASES_1"/>
    <property type="match status" value="1"/>
</dbReference>
<evidence type="ECO:0000250" key="1"/>
<evidence type="ECO:0000255" key="2"/>
<evidence type="ECO:0000305" key="3"/>
<evidence type="ECO:0000305" key="4">
    <source>
    </source>
</evidence>
<accession>Q7CPR9</accession>
<accession>Q9AJ74</accession>
<accession>Q9RFY7</accession>
<accession>Q9RFY8</accession>
<proteinExistence type="inferred from homology"/>
<feature type="chain" id="PRO_0000080125" description="Bifunctional protein HldE">
    <location>
        <begin position="1"/>
        <end position="477"/>
    </location>
</feature>
<feature type="region of interest" description="Ribokinase">
    <location>
        <begin position="1"/>
        <end position="318"/>
    </location>
</feature>
<feature type="region of interest" description="Cytidylyltransferase">
    <location>
        <begin position="344"/>
        <end position="477"/>
    </location>
</feature>
<feature type="active site" evidence="2">
    <location>
        <position position="264"/>
    </location>
</feature>
<feature type="binding site" evidence="2">
    <location>
        <begin position="195"/>
        <end position="198"/>
    </location>
    <ligand>
        <name>ATP</name>
        <dbReference type="ChEBI" id="CHEBI:30616"/>
    </ligand>
</feature>
<feature type="sequence variant" description="In mutants SL1102 and SL1027; heptoseless LPS.">
    <original>K</original>
    <variation>R</variation>
    <location>
        <position position="2"/>
    </location>
</feature>
<feature type="sequence variant" description="In mutant SL1102; heptoseless LPS.">
    <original>G</original>
    <variation>E</variation>
    <location>
        <position position="236"/>
    </location>
</feature>
<feature type="sequence variant" description="In mutant SL1102; heptoseless LPS.">
    <location>
        <begin position="273"/>
        <end position="276"/>
    </location>
</feature>
<feature type="sequence variant" description="In mutant SL1027; heptoseless LPS.">
    <original>RA</original>
    <variation>PP</variation>
    <location>
        <begin position="315"/>
        <end position="316"/>
    </location>
</feature>
<feature type="sequence conflict" description="In Ref. 1; AAK20933." evidence="3" ref="1">
    <original>N</original>
    <variation>T</variation>
    <location>
        <position position="4"/>
    </location>
</feature>
<feature type="sequence conflict" description="In Ref. 1; AAK20933." evidence="3" ref="1">
    <original>A</original>
    <variation>E</variation>
    <location>
        <position position="7"/>
    </location>
</feature>
<comment type="function">
    <text evidence="4">Catalyzes the phosphorylation of D-glycero-D-manno-heptose 7-phosphate at the C-1 position to selectively form D-glycero-beta-D-manno-heptose-1,7-bisphosphate.</text>
</comment>
<comment type="function">
    <text evidence="4">Catalyzes the ADP transfer from ATP to D-glycero-beta-D-manno-heptose 1-phosphate, yielding ADP-D-glycero-beta-D-manno-heptose.</text>
</comment>
<comment type="catalytic activity">
    <reaction>
        <text>D-glycero-beta-D-manno-heptose 7-phosphate + ATP = D-glycero-beta-D-manno-heptose 1,7-bisphosphate + ADP + H(+)</text>
        <dbReference type="Rhea" id="RHEA:27473"/>
        <dbReference type="ChEBI" id="CHEBI:15378"/>
        <dbReference type="ChEBI" id="CHEBI:30616"/>
        <dbReference type="ChEBI" id="CHEBI:60204"/>
        <dbReference type="ChEBI" id="CHEBI:60208"/>
        <dbReference type="ChEBI" id="CHEBI:456216"/>
        <dbReference type="EC" id="2.7.1.167"/>
    </reaction>
</comment>
<comment type="catalytic activity">
    <reaction>
        <text>D-glycero-beta-D-manno-heptose 1-phosphate + ATP + H(+) = ADP-D-glycero-beta-D-manno-heptose + diphosphate</text>
        <dbReference type="Rhea" id="RHEA:27465"/>
        <dbReference type="ChEBI" id="CHEBI:15378"/>
        <dbReference type="ChEBI" id="CHEBI:30616"/>
        <dbReference type="ChEBI" id="CHEBI:33019"/>
        <dbReference type="ChEBI" id="CHEBI:59967"/>
        <dbReference type="ChEBI" id="CHEBI:61593"/>
        <dbReference type="EC" id="2.7.7.70"/>
    </reaction>
</comment>
<comment type="pathway">
    <text>Nucleotide-sugar biosynthesis; ADP-L-glycero-beta-D-manno-heptose biosynthesis; ADP-L-glycero-beta-D-manno-heptose from D-glycero-beta-D-manno-heptose 7-phosphate: step 1/4.</text>
</comment>
<comment type="pathway">
    <text>Nucleotide-sugar biosynthesis; ADP-L-glycero-beta-D-manno-heptose biosynthesis; ADP-L-glycero-beta-D-manno-heptose from D-glycero-beta-D-manno-heptose 7-phosphate: step 3/4.</text>
</comment>
<comment type="pathway">
    <text>Bacterial outer membrane biogenesis; LPS core biosynthesis.</text>
</comment>
<comment type="subunit">
    <text evidence="1">Homodimer.</text>
</comment>
<comment type="similarity">
    <text evidence="3">In the N-terminal section; belongs to the carbohydrate kinase PfkB family.</text>
</comment>
<comment type="similarity">
    <text evidence="3">In the C-terminal section; belongs to the cytidylyltransferase family.</text>
</comment>